<accession>Q28HK1</accession>
<name>UCMA_XENTR</name>
<feature type="signal peptide" evidence="2">
    <location>
        <begin position="1"/>
        <end position="26"/>
    </location>
</feature>
<feature type="chain" id="PRO_0000371307" description="Unique cartilage matrix-associated protein">
    <location>
        <begin position="27"/>
        <end position="138"/>
    </location>
</feature>
<feature type="propeptide" id="PRO_0000371308" description="Ucma-N" evidence="1">
    <location>
        <begin position="28"/>
        <end position="64"/>
    </location>
</feature>
<feature type="chain" id="PRO_0000371309" description="Unique cartilage matrix-associated protein C-terminal fragment" evidence="1">
    <location>
        <begin position="65"/>
        <end position="138"/>
    </location>
</feature>
<feature type="region of interest" description="Disordered" evidence="3">
    <location>
        <begin position="58"/>
        <end position="116"/>
    </location>
</feature>
<feature type="coiled-coil region" evidence="2">
    <location>
        <begin position="69"/>
        <end position="118"/>
    </location>
</feature>
<feature type="compositionally biased region" description="Basic and acidic residues" evidence="3">
    <location>
        <begin position="67"/>
        <end position="102"/>
    </location>
</feature>
<feature type="modified residue" description="4-carboxyglutamate" evidence="1">
    <location>
        <position position="71"/>
    </location>
</feature>
<feature type="modified residue" description="4-carboxyglutamate" evidence="1">
    <location>
        <position position="75"/>
    </location>
</feature>
<feature type="modified residue" description="4-carboxyglutamate" evidence="1">
    <location>
        <position position="84"/>
    </location>
</feature>
<feature type="modified residue" description="4-carboxyglutamate" evidence="1">
    <location>
        <position position="88"/>
    </location>
</feature>
<feature type="modified residue" description="4-carboxyglutamate" evidence="1">
    <location>
        <position position="91"/>
    </location>
</feature>
<feature type="modified residue" description="4-carboxyglutamate" evidence="1">
    <location>
        <position position="92"/>
    </location>
</feature>
<feature type="modified residue" description="4-carboxyglutamate" evidence="1">
    <location>
        <position position="96"/>
    </location>
</feature>
<feature type="modified residue" description="4-carboxyglutamate" evidence="1">
    <location>
        <position position="98"/>
    </location>
</feature>
<feature type="modified residue" description="4-carboxyglutamate" evidence="1">
    <location>
        <position position="102"/>
    </location>
</feature>
<feature type="modified residue" description="4-carboxyglutamate" evidence="1">
    <location>
        <position position="103"/>
    </location>
</feature>
<feature type="modified residue" description="4-carboxyglutamate" evidence="1">
    <location>
        <position position="107"/>
    </location>
</feature>
<feature type="modified residue" description="4-carboxyglutamate" evidence="1">
    <location>
        <position position="110"/>
    </location>
</feature>
<feature type="modified residue" description="4-carboxyglutamate" evidence="1">
    <location>
        <position position="114"/>
    </location>
</feature>
<feature type="modified residue" description="4-carboxyglutamate" evidence="1">
    <location>
        <position position="117"/>
    </location>
</feature>
<gene>
    <name type="primary">ucma</name>
    <name type="ORF">TTpA007d02.1</name>
</gene>
<dbReference type="EMBL" id="CR760848">
    <property type="protein sequence ID" value="CAJ83238.1"/>
    <property type="molecule type" value="mRNA"/>
</dbReference>
<dbReference type="EMBL" id="BC135882">
    <property type="protein sequence ID" value="AAI35883.1"/>
    <property type="molecule type" value="mRNA"/>
</dbReference>
<dbReference type="RefSeq" id="NP_001016485.1">
    <property type="nucleotide sequence ID" value="NM_001016485.2"/>
</dbReference>
<dbReference type="FunCoup" id="Q28HK1">
    <property type="interactions" value="5"/>
</dbReference>
<dbReference type="STRING" id="8364.ENSXETP00000003163"/>
<dbReference type="PaxDb" id="8364-ENSXETP00000019992"/>
<dbReference type="GeneID" id="549239"/>
<dbReference type="KEGG" id="xtr:549239"/>
<dbReference type="AGR" id="Xenbase:XB-GENE-5752310"/>
<dbReference type="CTD" id="221044"/>
<dbReference type="Xenbase" id="XB-GENE-5752310">
    <property type="gene designation" value="ucma"/>
</dbReference>
<dbReference type="eggNOG" id="ENOG502S1J9">
    <property type="taxonomic scope" value="Eukaryota"/>
</dbReference>
<dbReference type="HOGENOM" id="CLU_153982_0_0_1"/>
<dbReference type="InParanoid" id="Q28HK1"/>
<dbReference type="OMA" id="TMLQEGT"/>
<dbReference type="OrthoDB" id="8907123at2759"/>
<dbReference type="PhylomeDB" id="Q28HK1"/>
<dbReference type="TreeFam" id="TF332568"/>
<dbReference type="Proteomes" id="UP000008143">
    <property type="component" value="Chromosome 3"/>
</dbReference>
<dbReference type="Bgee" id="ENSXETG00000009114">
    <property type="expression patterns" value="Expressed in liver and 9 other cell types or tissues"/>
</dbReference>
<dbReference type="GO" id="GO:0005576">
    <property type="term" value="C:extracellular region"/>
    <property type="evidence" value="ECO:0007669"/>
    <property type="project" value="UniProtKB-KW"/>
</dbReference>
<dbReference type="GO" id="GO:0045667">
    <property type="term" value="P:regulation of osteoblast differentiation"/>
    <property type="evidence" value="ECO:0007669"/>
    <property type="project" value="InterPro"/>
</dbReference>
<dbReference type="InterPro" id="IPR031386">
    <property type="entry name" value="UCMA"/>
</dbReference>
<dbReference type="PANTHER" id="PTHR28647">
    <property type="entry name" value="UNIQUE CARTILAGE MATRIX-ASSOCIATED PROTEIN"/>
    <property type="match status" value="1"/>
</dbReference>
<dbReference type="PANTHER" id="PTHR28647:SF2">
    <property type="entry name" value="UNIQUE CARTILAGE MATRIX-ASSOCIATED PROTEIN"/>
    <property type="match status" value="1"/>
</dbReference>
<dbReference type="Pfam" id="PF17085">
    <property type="entry name" value="UCMA"/>
    <property type="match status" value="1"/>
</dbReference>
<comment type="function">
    <text evidence="1">May be involved in the negative control of osteogenic differentiation of osteochondrogenic precursor cells in peripheral zones of fetal cartilage and at the cartilage-bone interface.</text>
</comment>
<comment type="subcellular location">
    <subcellularLocation>
        <location evidence="1">Secreted</location>
        <location evidence="1">Extracellular space</location>
        <location evidence="1">Extracellular matrix</location>
    </subcellularLocation>
</comment>
<comment type="PTM">
    <text evidence="1">Proteolytically cleaved by a furin-like convertase to generate a persistent C-terminal fragment found in almost the entire cartilage matrix, and affecting osteoblast differentiation.</text>
</comment>
<comment type="PTM">
    <text evidence="1">Sulfated on tyrosine residues.</text>
</comment>
<comment type="similarity">
    <text evidence="4">Belongs to the UCMA family.</text>
</comment>
<protein>
    <recommendedName>
        <fullName>Unique cartilage matrix-associated protein</fullName>
    </recommendedName>
    <component>
        <recommendedName>
            <fullName>Unique cartilage matrix-associated protein C-terminal fragment</fullName>
            <shortName>Ucma-C</shortName>
        </recommendedName>
        <alternativeName>
            <fullName>Gla-rich protein</fullName>
            <shortName>GRP</shortName>
        </alternativeName>
    </component>
</protein>
<organism>
    <name type="scientific">Xenopus tropicalis</name>
    <name type="common">Western clawed frog</name>
    <name type="synonym">Silurana tropicalis</name>
    <dbReference type="NCBI Taxonomy" id="8364"/>
    <lineage>
        <taxon>Eukaryota</taxon>
        <taxon>Metazoa</taxon>
        <taxon>Chordata</taxon>
        <taxon>Craniata</taxon>
        <taxon>Vertebrata</taxon>
        <taxon>Euteleostomi</taxon>
        <taxon>Amphibia</taxon>
        <taxon>Batrachia</taxon>
        <taxon>Anura</taxon>
        <taxon>Pipoidea</taxon>
        <taxon>Pipidae</taxon>
        <taxon>Xenopodinae</taxon>
        <taxon>Xenopus</taxon>
        <taxon>Silurana</taxon>
    </lineage>
</organism>
<reference key="1">
    <citation type="submission" date="2006-10" db="EMBL/GenBank/DDBJ databases">
        <authorList>
            <consortium name="Sanger Xenopus tropicalis EST/cDNA project"/>
        </authorList>
    </citation>
    <scope>NUCLEOTIDE SEQUENCE [LARGE SCALE MRNA]</scope>
    <source>
        <tissue>Tadpole</tissue>
    </source>
</reference>
<reference key="2">
    <citation type="submission" date="2007-03" db="EMBL/GenBank/DDBJ databases">
        <authorList>
            <consortium name="NIH - Xenopus Gene Collection (XGC) project"/>
        </authorList>
    </citation>
    <scope>NUCLEOTIDE SEQUENCE [LARGE SCALE MRNA]</scope>
    <source>
        <tissue>Embryo</tissue>
    </source>
</reference>
<sequence length="138" mass="16455">MKRNQVLFLTCAAAVVFLAVLHVGESAAVRSKDDPAPDKKESLKSKIFMQGSEASNFFKKRGKRSPKSQDEINAENRQRLSADERRREYYEEQRNEFENHVEEEQDEQEERSREQIEQWRQWHYDGLSPSYLYQRQNI</sequence>
<evidence type="ECO:0000250" key="1"/>
<evidence type="ECO:0000255" key="2"/>
<evidence type="ECO:0000256" key="3">
    <source>
        <dbReference type="SAM" id="MobiDB-lite"/>
    </source>
</evidence>
<evidence type="ECO:0000305" key="4"/>
<keyword id="KW-0175">Coiled coil</keyword>
<keyword id="KW-0272">Extracellular matrix</keyword>
<keyword id="KW-0301">Gamma-carboxyglutamic acid</keyword>
<keyword id="KW-1185">Reference proteome</keyword>
<keyword id="KW-0964">Secreted</keyword>
<keyword id="KW-0732">Signal</keyword>
<keyword id="KW-0765">Sulfation</keyword>
<proteinExistence type="evidence at transcript level"/>